<name>BRMS1_HUMAN</name>
<feature type="chain" id="PRO_0000064988" description="Breast cancer metastasis-suppressor 1">
    <location>
        <begin position="1"/>
        <end position="246"/>
    </location>
</feature>
<feature type="region of interest" description="Disordered" evidence="2">
    <location>
        <begin position="1"/>
        <end position="57"/>
    </location>
</feature>
<feature type="coiled-coil region" evidence="7">
    <location>
        <begin position="51"/>
        <end position="98"/>
    </location>
</feature>
<feature type="compositionally biased region" description="Acidic residues" evidence="2">
    <location>
        <begin position="11"/>
        <end position="32"/>
    </location>
</feature>
<feature type="compositionally biased region" description="Acidic residues" evidence="2">
    <location>
        <begin position="40"/>
        <end position="52"/>
    </location>
</feature>
<feature type="cross-link" description="Glycyl lysine isopeptide (Lys-Gly) (interchain with G-Cter in SUMO2)" evidence="10">
    <location>
        <position position="184"/>
    </location>
</feature>
<feature type="cross-link" description="Glycyl lysine isopeptide (Lys-Gly) (interchain with G-Cter in SUMO2)" evidence="1">
    <location>
        <position position="242"/>
    </location>
</feature>
<feature type="helix" evidence="11">
    <location>
        <begin position="55"/>
        <end position="93"/>
    </location>
</feature>
<gene>
    <name type="primary">BRMS1</name>
</gene>
<reference key="1">
    <citation type="journal article" date="2000" name="Cancer Res.">
        <title>Functional evidence for a novel human breast carcinoma metastasis suppressor, BRMS1, encoded at chromosome 11q13.</title>
        <authorList>
            <person name="Seraj M.J."/>
            <person name="Samant R.S."/>
            <person name="Verderame M.F."/>
            <person name="Welch D.R."/>
        </authorList>
    </citation>
    <scope>NUCLEOTIDE SEQUENCE [MRNA]</scope>
    <source>
        <tissue>Kidney</tissue>
    </source>
</reference>
<reference key="2">
    <citation type="submission" date="2000-06" db="EMBL/GenBank/DDBJ databases">
        <title>Genomic structure and chromosomal localization of the breast metastasis suppressor gene, BRMS1.</title>
        <authorList>
            <person name="Welch D.R."/>
            <person name="Samant R.S."/>
            <person name="Debies M.T."/>
            <person name="Seraj M.J."/>
            <person name="Verderame M.F."/>
        </authorList>
    </citation>
    <scope>NUCLEOTIDE SEQUENCE [GENOMIC DNA]</scope>
</reference>
<reference key="3">
    <citation type="submission" date="2004-06" db="EMBL/GenBank/DDBJ databases">
        <title>Cloning of human full open reading frames in Gateway(TM) system entry vector (pDONR201).</title>
        <authorList>
            <person name="Ebert L."/>
            <person name="Schick M."/>
            <person name="Neubert P."/>
            <person name="Schatten R."/>
            <person name="Henze S."/>
            <person name="Korn B."/>
        </authorList>
    </citation>
    <scope>NUCLEOTIDE SEQUENCE [LARGE SCALE MRNA]</scope>
</reference>
<reference key="4">
    <citation type="journal article" date="2004" name="Nat. Genet.">
        <title>Complete sequencing and characterization of 21,243 full-length human cDNAs.</title>
        <authorList>
            <person name="Ota T."/>
            <person name="Suzuki Y."/>
            <person name="Nishikawa T."/>
            <person name="Otsuki T."/>
            <person name="Sugiyama T."/>
            <person name="Irie R."/>
            <person name="Wakamatsu A."/>
            <person name="Hayashi K."/>
            <person name="Sato H."/>
            <person name="Nagai K."/>
            <person name="Kimura K."/>
            <person name="Makita H."/>
            <person name="Sekine M."/>
            <person name="Obayashi M."/>
            <person name="Nishi T."/>
            <person name="Shibahara T."/>
            <person name="Tanaka T."/>
            <person name="Ishii S."/>
            <person name="Yamamoto J."/>
            <person name="Saito K."/>
            <person name="Kawai Y."/>
            <person name="Isono Y."/>
            <person name="Nakamura Y."/>
            <person name="Nagahari K."/>
            <person name="Murakami K."/>
            <person name="Yasuda T."/>
            <person name="Iwayanagi T."/>
            <person name="Wagatsuma M."/>
            <person name="Shiratori A."/>
            <person name="Sudo H."/>
            <person name="Hosoiri T."/>
            <person name="Kaku Y."/>
            <person name="Kodaira H."/>
            <person name="Kondo H."/>
            <person name="Sugawara M."/>
            <person name="Takahashi M."/>
            <person name="Kanda K."/>
            <person name="Yokoi T."/>
            <person name="Furuya T."/>
            <person name="Kikkawa E."/>
            <person name="Omura Y."/>
            <person name="Abe K."/>
            <person name="Kamihara K."/>
            <person name="Katsuta N."/>
            <person name="Sato K."/>
            <person name="Tanikawa M."/>
            <person name="Yamazaki M."/>
            <person name="Ninomiya K."/>
            <person name="Ishibashi T."/>
            <person name="Yamashita H."/>
            <person name="Murakawa K."/>
            <person name="Fujimori K."/>
            <person name="Tanai H."/>
            <person name="Kimata M."/>
            <person name="Watanabe M."/>
            <person name="Hiraoka S."/>
            <person name="Chiba Y."/>
            <person name="Ishida S."/>
            <person name="Ono Y."/>
            <person name="Takiguchi S."/>
            <person name="Watanabe S."/>
            <person name="Yosida M."/>
            <person name="Hotuta T."/>
            <person name="Kusano J."/>
            <person name="Kanehori K."/>
            <person name="Takahashi-Fujii A."/>
            <person name="Hara H."/>
            <person name="Tanase T.-O."/>
            <person name="Nomura Y."/>
            <person name="Togiya S."/>
            <person name="Komai F."/>
            <person name="Hara R."/>
            <person name="Takeuchi K."/>
            <person name="Arita M."/>
            <person name="Imose N."/>
            <person name="Musashino K."/>
            <person name="Yuuki H."/>
            <person name="Oshima A."/>
            <person name="Sasaki N."/>
            <person name="Aotsuka S."/>
            <person name="Yoshikawa Y."/>
            <person name="Matsunawa H."/>
            <person name="Ichihara T."/>
            <person name="Shiohata N."/>
            <person name="Sano S."/>
            <person name="Moriya S."/>
            <person name="Momiyama H."/>
            <person name="Satoh N."/>
            <person name="Takami S."/>
            <person name="Terashima Y."/>
            <person name="Suzuki O."/>
            <person name="Nakagawa S."/>
            <person name="Senoh A."/>
            <person name="Mizoguchi H."/>
            <person name="Goto Y."/>
            <person name="Shimizu F."/>
            <person name="Wakebe H."/>
            <person name="Hishigaki H."/>
            <person name="Watanabe T."/>
            <person name="Sugiyama A."/>
            <person name="Takemoto M."/>
            <person name="Kawakami B."/>
            <person name="Yamazaki M."/>
            <person name="Watanabe K."/>
            <person name="Kumagai A."/>
            <person name="Itakura S."/>
            <person name="Fukuzumi Y."/>
            <person name="Fujimori Y."/>
            <person name="Komiyama M."/>
            <person name="Tashiro H."/>
            <person name="Tanigami A."/>
            <person name="Fujiwara T."/>
            <person name="Ono T."/>
            <person name="Yamada K."/>
            <person name="Fujii Y."/>
            <person name="Ozaki K."/>
            <person name="Hirao M."/>
            <person name="Ohmori Y."/>
            <person name="Kawabata A."/>
            <person name="Hikiji T."/>
            <person name="Kobatake N."/>
            <person name="Inagaki H."/>
            <person name="Ikema Y."/>
            <person name="Okamoto S."/>
            <person name="Okitani R."/>
            <person name="Kawakami T."/>
            <person name="Noguchi S."/>
            <person name="Itoh T."/>
            <person name="Shigeta K."/>
            <person name="Senba T."/>
            <person name="Matsumura K."/>
            <person name="Nakajima Y."/>
            <person name="Mizuno T."/>
            <person name="Morinaga M."/>
            <person name="Sasaki M."/>
            <person name="Togashi T."/>
            <person name="Oyama M."/>
            <person name="Hata H."/>
            <person name="Watanabe M."/>
            <person name="Komatsu T."/>
            <person name="Mizushima-Sugano J."/>
            <person name="Satoh T."/>
            <person name="Shirai Y."/>
            <person name="Takahashi Y."/>
            <person name="Nakagawa K."/>
            <person name="Okumura K."/>
            <person name="Nagase T."/>
            <person name="Nomura N."/>
            <person name="Kikuchi H."/>
            <person name="Masuho Y."/>
            <person name="Yamashita R."/>
            <person name="Nakai K."/>
            <person name="Yada T."/>
            <person name="Nakamura Y."/>
            <person name="Ohara O."/>
            <person name="Isogai T."/>
            <person name="Sugano S."/>
        </authorList>
    </citation>
    <scope>NUCLEOTIDE SEQUENCE [LARGE SCALE MRNA]</scope>
    <source>
        <tissue>Testis</tissue>
    </source>
</reference>
<reference key="5">
    <citation type="journal article" date="2004" name="Genome Res.">
        <title>The status, quality, and expansion of the NIH full-length cDNA project: the Mammalian Gene Collection (MGC).</title>
        <authorList>
            <consortium name="The MGC Project Team"/>
        </authorList>
    </citation>
    <scope>NUCLEOTIDE SEQUENCE [LARGE SCALE MRNA]</scope>
    <source>
        <tissue>Placenta</tissue>
    </source>
</reference>
<reference key="6">
    <citation type="journal article" date="2002" name="J. Clin. Endocrinol. Metab.">
        <title>Transcriptional expression of genes involved in cell invasion and migration by normal and tumoral trophoblast cells.</title>
        <authorList>
            <person name="Janneau J.-L."/>
            <person name="Maldonado-Estrada J."/>
            <person name="Tachdjian G."/>
            <person name="Miran I."/>
            <person name="Motte N."/>
            <person name="Saulnier P."/>
            <person name="Sabourin J.-C."/>
            <person name="Cote J.-F."/>
            <person name="Simon B."/>
            <person name="Frydman R."/>
            <person name="Chaouat G."/>
            <person name="Bellet D."/>
        </authorList>
    </citation>
    <scope>TISSUE SPECIFICITY</scope>
    <scope>POSSIBLE INVOLVEMENT IN INVASION/MIGRATION OF TROPHOBLAST CELLS</scope>
</reference>
<reference key="7">
    <citation type="journal article" date="2004" name="J. Biol. Chem.">
        <title>Breast cancer metastasis suppressor 1 (BRMS1) forms complexes with retinoblastoma-binding protein 1 (RBP1) and the mSin3 histone deacetylase complex and represses transcription.</title>
        <authorList>
            <person name="Meehan W.J."/>
            <person name="Samant R.S."/>
            <person name="Hopper J.E."/>
            <person name="Carrozza M.J."/>
            <person name="Shevde L.A."/>
            <person name="Workman J.L."/>
            <person name="Eckert K.A."/>
            <person name="Verderame M.F."/>
            <person name="Welch D.R."/>
        </authorList>
    </citation>
    <scope>FUNCTION</scope>
    <scope>INTERACTION WITH ARID4A</scope>
    <scope>IDENTIFICATION IN A COMPLEX WITH SIN3A; SIN3B; HDAC1; HDAC2; SAP30; SUDS3; RBBP4 AND RBBP7</scope>
</reference>
<reference key="8">
    <citation type="journal article" date="2006" name="Mol. Cell. Biol.">
        <title>Breast cancer metastasis suppressor 1 functions as a corepressor by enhancing histone deacetylase 1-mediated deacetylation of RelA/p65 and promoting apoptosis.</title>
        <authorList>
            <person name="Liu Y."/>
            <person name="Smith P.W."/>
            <person name="Jones D.R."/>
        </authorList>
    </citation>
    <scope>FUNCTION</scope>
    <scope>SUBCELLULAR LOCATION</scope>
    <scope>INTERACTION WITH HDAC1 AND RELA</scope>
</reference>
<reference key="9">
    <citation type="journal article" date="2010" name="J. Cell. Biochem.">
        <title>Sorting nexin 6 interacts with breast cancer metastasis suppressor-1 and promotes transcriptional repression.</title>
        <authorList>
            <person name="Rivera J."/>
            <person name="Megias D."/>
            <person name="Bravo J."/>
        </authorList>
    </citation>
    <scope>FUNCTION</scope>
    <scope>SUBCELLULAR LOCATION</scope>
    <scope>INTERACTION WITH SNX6</scope>
</reference>
<reference key="10">
    <citation type="journal article" date="2011" name="Biochem. Biophys. Res. Commun.">
        <title>Breast cancer metastasis suppressor 1 (BRMS1) is destabilized by the Cul3-SPOP E3 ubiquitin ligase complex.</title>
        <authorList>
            <person name="Kim B."/>
            <person name="Nam H.J."/>
            <person name="Pyo K.E."/>
            <person name="Jang M.J."/>
            <person name="Kim I.S."/>
            <person name="Kim D."/>
            <person name="Boo K."/>
            <person name="Lee S.H."/>
            <person name="Yoon J.B."/>
            <person name="Baek S.H."/>
            <person name="Kim J.H."/>
        </authorList>
    </citation>
    <scope>UBIQUITINATION</scope>
    <scope>SUBCELLULAR LOCATION</scope>
    <scope>INTERACTION WITH SPOP</scope>
    <scope>IDENTIFICATION IN A COMPLEX WITH CUL3 AND SPOP</scope>
</reference>
<reference key="11">
    <citation type="journal article" date="2017" name="Nat. Struct. Mol. Biol.">
        <title>Site-specific mapping of the human SUMO proteome reveals co-modification with phosphorylation.</title>
        <authorList>
            <person name="Hendriks I.A."/>
            <person name="Lyon D."/>
            <person name="Young C."/>
            <person name="Jensen L.J."/>
            <person name="Vertegaal A.C."/>
            <person name="Nielsen M.L."/>
        </authorList>
    </citation>
    <scope>SUMOYLATION [LARGE SCALE ANALYSIS] AT LYS-184</scope>
    <scope>IDENTIFICATION BY MASS SPECTROMETRY [LARGE SCALE ANALYSIS]</scope>
</reference>
<reference key="12">
    <citation type="journal article" date="2011" name="J. Mol. Biol.">
        <title>The structure of BRMS1 nuclear export signal and SNX6 interacting region reveals a hexamer formed by antiparallel coiled coils.</title>
        <authorList>
            <person name="Spinola-Amilibia M."/>
            <person name="Rivera J."/>
            <person name="Ortiz-Lombardia M."/>
            <person name="Romero A."/>
            <person name="Neira J.L."/>
            <person name="Bravo J."/>
        </authorList>
    </citation>
    <scope>X-RAY CRYSTALLOGRAPHY (1.91 ANGSTROMS) OF 51-98</scope>
    <scope>COILED-COIL DOMAIN</scope>
    <scope>SUBUNIT</scope>
</reference>
<keyword id="KW-0002">3D-structure</keyword>
<keyword id="KW-0053">Apoptosis</keyword>
<keyword id="KW-0175">Coiled coil</keyword>
<keyword id="KW-0963">Cytoplasm</keyword>
<keyword id="KW-1017">Isopeptide bond</keyword>
<keyword id="KW-0539">Nucleus</keyword>
<keyword id="KW-1267">Proteomics identification</keyword>
<keyword id="KW-1185">Reference proteome</keyword>
<keyword id="KW-0678">Repressor</keyword>
<keyword id="KW-0804">Transcription</keyword>
<keyword id="KW-0805">Transcription regulation</keyword>
<keyword id="KW-0043">Tumor suppressor</keyword>
<keyword id="KW-0832">Ubl conjugation</keyword>
<dbReference type="EMBL" id="AF159141">
    <property type="protein sequence ID" value="AAG00075.1"/>
    <property type="molecule type" value="mRNA"/>
</dbReference>
<dbReference type="EMBL" id="AF281036">
    <property type="protein sequence ID" value="AAK69131.1"/>
    <property type="molecule type" value="Genomic_DNA"/>
</dbReference>
<dbReference type="EMBL" id="CR457173">
    <property type="protein sequence ID" value="CAG33454.1"/>
    <property type="molecule type" value="mRNA"/>
</dbReference>
<dbReference type="EMBL" id="AK313773">
    <property type="protein sequence ID" value="BAG36511.1"/>
    <property type="molecule type" value="mRNA"/>
</dbReference>
<dbReference type="EMBL" id="BC009834">
    <property type="protein sequence ID" value="AAH09834.1"/>
    <property type="molecule type" value="mRNA"/>
</dbReference>
<dbReference type="CCDS" id="CCDS8135.1"/>
<dbReference type="RefSeq" id="NP_056214.1">
    <property type="nucleotide sequence ID" value="NM_015399.4"/>
</dbReference>
<dbReference type="PDB" id="2XUS">
    <property type="method" value="X-ray"/>
    <property type="resolution" value="1.91 A"/>
    <property type="chains" value="A/B=51-98"/>
</dbReference>
<dbReference type="PDB" id="4AUV">
    <property type="method" value="X-ray"/>
    <property type="resolution" value="2.00 A"/>
    <property type="chains" value="A/B/C/D/E/F/G/H=51-84"/>
</dbReference>
<dbReference type="PDBsum" id="2XUS"/>
<dbReference type="PDBsum" id="4AUV"/>
<dbReference type="SMR" id="Q9HCU9"/>
<dbReference type="BioGRID" id="117379">
    <property type="interactions" value="124"/>
</dbReference>
<dbReference type="ComplexPortal" id="CPX-3321">
    <property type="entry name" value="SIN3A histone deacetylase complex"/>
</dbReference>
<dbReference type="ComplexPortal" id="CPX-3322">
    <property type="entry name" value="SIN3B histone deacetylase complex"/>
</dbReference>
<dbReference type="ComplexPortal" id="CPX-3323">
    <property type="entry name" value="SIN3A histone deacetylase complex, ES cell-specific variant"/>
</dbReference>
<dbReference type="CORUM" id="Q9HCU9"/>
<dbReference type="DIP" id="DIP-24250N"/>
<dbReference type="FunCoup" id="Q9HCU9">
    <property type="interactions" value="2526"/>
</dbReference>
<dbReference type="IntAct" id="Q9HCU9">
    <property type="interactions" value="64"/>
</dbReference>
<dbReference type="MINT" id="Q9HCU9"/>
<dbReference type="STRING" id="9606.ENSP00000396052"/>
<dbReference type="iPTMnet" id="Q9HCU9"/>
<dbReference type="PhosphoSitePlus" id="Q9HCU9"/>
<dbReference type="BioMuta" id="BRMS1"/>
<dbReference type="DMDM" id="18202959"/>
<dbReference type="jPOST" id="Q9HCU9"/>
<dbReference type="MassIVE" id="Q9HCU9"/>
<dbReference type="PaxDb" id="9606-ENSP00000396052"/>
<dbReference type="PeptideAtlas" id="Q9HCU9"/>
<dbReference type="ProteomicsDB" id="81803"/>
<dbReference type="Pumba" id="Q9HCU9"/>
<dbReference type="Antibodypedia" id="4414">
    <property type="antibodies" value="296 antibodies from 32 providers"/>
</dbReference>
<dbReference type="DNASU" id="25855"/>
<dbReference type="Ensembl" id="ENST00000359957.8">
    <property type="protein sequence ID" value="ENSP00000353042.3"/>
    <property type="gene ID" value="ENSG00000174744.14"/>
</dbReference>
<dbReference type="GeneID" id="25855"/>
<dbReference type="KEGG" id="hsa:25855"/>
<dbReference type="MANE-Select" id="ENST00000359957.8">
    <property type="protein sequence ID" value="ENSP00000353042.3"/>
    <property type="RefSeq nucleotide sequence ID" value="NM_015399.4"/>
    <property type="RefSeq protein sequence ID" value="NP_056214.1"/>
</dbReference>
<dbReference type="UCSC" id="uc001ohp.2">
    <property type="organism name" value="human"/>
</dbReference>
<dbReference type="AGR" id="HGNC:17262"/>
<dbReference type="CTD" id="25855"/>
<dbReference type="DisGeNET" id="25855"/>
<dbReference type="GeneCards" id="BRMS1"/>
<dbReference type="HGNC" id="HGNC:17262">
    <property type="gene designation" value="BRMS1"/>
</dbReference>
<dbReference type="HPA" id="ENSG00000174744">
    <property type="expression patterns" value="Low tissue specificity"/>
</dbReference>
<dbReference type="MalaCards" id="BRMS1"/>
<dbReference type="MIM" id="606259">
    <property type="type" value="gene"/>
</dbReference>
<dbReference type="neXtProt" id="NX_Q9HCU9"/>
<dbReference type="OpenTargets" id="ENSG00000174744"/>
<dbReference type="PharmGKB" id="PA164741342"/>
<dbReference type="VEuPathDB" id="HostDB:ENSG00000174744"/>
<dbReference type="eggNOG" id="KOG4466">
    <property type="taxonomic scope" value="Eukaryota"/>
</dbReference>
<dbReference type="GeneTree" id="ENSGT00940000161779"/>
<dbReference type="InParanoid" id="Q9HCU9"/>
<dbReference type="OMA" id="SEKHMAV"/>
<dbReference type="OrthoDB" id="20886at2759"/>
<dbReference type="PAN-GO" id="Q9HCU9">
    <property type="GO annotations" value="4 GO annotations based on evolutionary models"/>
</dbReference>
<dbReference type="PhylomeDB" id="Q9HCU9"/>
<dbReference type="PathwayCommons" id="Q9HCU9"/>
<dbReference type="Reactome" id="R-HSA-3214815">
    <property type="pathway name" value="HDACs deacetylate histones"/>
</dbReference>
<dbReference type="Reactome" id="R-HSA-9679191">
    <property type="pathway name" value="Potential therapeutics for SARS"/>
</dbReference>
<dbReference type="SignaLink" id="Q9HCU9"/>
<dbReference type="SIGNOR" id="Q9HCU9"/>
<dbReference type="BioGRID-ORCS" id="25855">
    <property type="hits" value="88 hits in 1169 CRISPR screens"/>
</dbReference>
<dbReference type="ChiTaRS" id="BRMS1">
    <property type="organism name" value="human"/>
</dbReference>
<dbReference type="EvolutionaryTrace" id="Q9HCU9"/>
<dbReference type="GeneWiki" id="BRMS1"/>
<dbReference type="GenomeRNAi" id="25855"/>
<dbReference type="Pharos" id="Q9HCU9">
    <property type="development level" value="Tbio"/>
</dbReference>
<dbReference type="PRO" id="PR:Q9HCU9"/>
<dbReference type="Proteomes" id="UP000005640">
    <property type="component" value="Chromosome 11"/>
</dbReference>
<dbReference type="RNAct" id="Q9HCU9">
    <property type="molecule type" value="protein"/>
</dbReference>
<dbReference type="Bgee" id="ENSG00000174744">
    <property type="expression patterns" value="Expressed in granulocyte and 167 other cell types or tissues"/>
</dbReference>
<dbReference type="ExpressionAtlas" id="Q9HCU9">
    <property type="expression patterns" value="baseline and differential"/>
</dbReference>
<dbReference type="GO" id="GO:0005737">
    <property type="term" value="C:cytoplasm"/>
    <property type="evidence" value="ECO:0000314"/>
    <property type="project" value="UniProtKB"/>
</dbReference>
<dbReference type="GO" id="GO:0005654">
    <property type="term" value="C:nucleoplasm"/>
    <property type="evidence" value="ECO:0000304"/>
    <property type="project" value="Reactome"/>
</dbReference>
<dbReference type="GO" id="GO:0005634">
    <property type="term" value="C:nucleus"/>
    <property type="evidence" value="ECO:0000314"/>
    <property type="project" value="UniProtKB"/>
</dbReference>
<dbReference type="GO" id="GO:0070822">
    <property type="term" value="C:Sin3-type complex"/>
    <property type="evidence" value="ECO:0000318"/>
    <property type="project" value="GO_Central"/>
</dbReference>
<dbReference type="GO" id="GO:0042826">
    <property type="term" value="F:histone deacetylase binding"/>
    <property type="evidence" value="ECO:0000318"/>
    <property type="project" value="GO_Central"/>
</dbReference>
<dbReference type="GO" id="GO:0051059">
    <property type="term" value="F:NF-kappaB binding"/>
    <property type="evidence" value="ECO:0000314"/>
    <property type="project" value="UniProtKB"/>
</dbReference>
<dbReference type="GO" id="GO:0006915">
    <property type="term" value="P:apoptotic process"/>
    <property type="evidence" value="ECO:0007669"/>
    <property type="project" value="UniProtKB-KW"/>
</dbReference>
<dbReference type="GO" id="GO:0030336">
    <property type="term" value="P:negative regulation of cell migration"/>
    <property type="evidence" value="ECO:0000303"/>
    <property type="project" value="ComplexPortal"/>
</dbReference>
<dbReference type="GO" id="GO:0045892">
    <property type="term" value="P:negative regulation of DNA-templated transcription"/>
    <property type="evidence" value="ECO:0000314"/>
    <property type="project" value="UniProtKB"/>
</dbReference>
<dbReference type="GO" id="GO:0032088">
    <property type="term" value="P:negative regulation of NF-kappaB transcription factor activity"/>
    <property type="evidence" value="ECO:0000314"/>
    <property type="project" value="UniProtKB"/>
</dbReference>
<dbReference type="GO" id="GO:1902455">
    <property type="term" value="P:negative regulation of stem cell population maintenance"/>
    <property type="evidence" value="ECO:0000303"/>
    <property type="project" value="ComplexPortal"/>
</dbReference>
<dbReference type="GO" id="GO:0000122">
    <property type="term" value="P:negative regulation of transcription by RNA polymerase II"/>
    <property type="evidence" value="ECO:0000318"/>
    <property type="project" value="GO_Central"/>
</dbReference>
<dbReference type="GO" id="GO:0030512">
    <property type="term" value="P:negative regulation of transforming growth factor beta receptor signaling pathway"/>
    <property type="evidence" value="ECO:0000303"/>
    <property type="project" value="ComplexPortal"/>
</dbReference>
<dbReference type="GO" id="GO:2000210">
    <property type="term" value="P:positive regulation of anoikis"/>
    <property type="evidence" value="ECO:0000315"/>
    <property type="project" value="UniProtKB"/>
</dbReference>
<dbReference type="GO" id="GO:0090312">
    <property type="term" value="P:positive regulation of protein deacetylation"/>
    <property type="evidence" value="ECO:0000314"/>
    <property type="project" value="UniProtKB"/>
</dbReference>
<dbReference type="GO" id="GO:1902459">
    <property type="term" value="P:positive regulation of stem cell population maintenance"/>
    <property type="evidence" value="ECO:0000303"/>
    <property type="project" value="ComplexPortal"/>
</dbReference>
<dbReference type="GO" id="GO:0042981">
    <property type="term" value="P:regulation of apoptotic process"/>
    <property type="evidence" value="ECO:0000314"/>
    <property type="project" value="UniProtKB"/>
</dbReference>
<dbReference type="FunFam" id="1.20.5.1500:FF:000002">
    <property type="entry name" value="breast cancer metastasis-suppressor 1-like protein-A"/>
    <property type="match status" value="1"/>
</dbReference>
<dbReference type="Gene3D" id="1.20.5.1500">
    <property type="match status" value="1"/>
</dbReference>
<dbReference type="IDEAL" id="IID00501"/>
<dbReference type="InterPro" id="IPR013907">
    <property type="entry name" value="Sds3"/>
</dbReference>
<dbReference type="PANTHER" id="PTHR21964">
    <property type="entry name" value="BREAST CANCER METASTASIS-SUPPRESSOR 1"/>
    <property type="match status" value="1"/>
</dbReference>
<dbReference type="Pfam" id="PF08598">
    <property type="entry name" value="Sds3"/>
    <property type="match status" value="1"/>
</dbReference>
<dbReference type="SMART" id="SM01401">
    <property type="entry name" value="Sds3"/>
    <property type="match status" value="1"/>
</dbReference>
<protein>
    <recommendedName>
        <fullName>Breast cancer metastasis-suppressor 1</fullName>
    </recommendedName>
</protein>
<comment type="function">
    <text evidence="4 5 6">Transcriptional repressor. Down-regulates transcription activation by NF-kappa-B by promoting the deacetylation of RELA at 'Lys-310'. Promotes HDAC1 binding to promoter regions. Down-regulates expression of anti-apoptotic genes that are controlled by NF-kappa-B. Promotes apoptosis in cells that have inadequate adherence to a substrate, a process called anoikis, and may thereby inhibit metastasis. May be a mediator of metastasis suppression in breast carcinoma.</text>
</comment>
<comment type="subunit">
    <text evidence="4 5 6 7 8 9">Homohexamer (Potential). Interacts with SNX6, HDAC1 and RELA. Interacts with ARID4A. Identified in mSin3A corepressor complexes together with SIN3A, SIN3B, RBBP4, RBBP7, SAP30, SUDS3, ARID4A, HDAC1 and HDAC2. Interacts with SPOP; this recruits the protein to a ubiquitin ligase complex containing SPOP and CUL3.</text>
</comment>
<comment type="interaction">
    <interactant intactId="EBI-714781">
        <id>Q9HCU9</id>
    </interactant>
    <interactant intactId="EBI-739624">
        <id>Q8NHQ1</id>
        <label>CEP70</label>
    </interactant>
    <organismsDiffer>false</organismsDiffer>
    <experiments>4</experiments>
</comment>
<comment type="interaction">
    <interactant intactId="EBI-714781">
        <id>Q9HCU9</id>
    </interactant>
    <interactant intactId="EBI-1053164">
        <id>O75190</id>
        <label>DNAJB6</label>
    </interactant>
    <organismsDiffer>false</organismsDiffer>
    <experiments>2</experiments>
</comment>
<comment type="interaction">
    <interactant intactId="EBI-714781">
        <id>Q9HCU9</id>
    </interactant>
    <interactant intactId="EBI-301834">
        <id>Q13547</id>
        <label>HDAC1</label>
    </interactant>
    <organismsDiffer>false</organismsDiffer>
    <experiments>8</experiments>
</comment>
<comment type="interaction">
    <interactant intactId="EBI-714781">
        <id>Q9HCU9</id>
    </interactant>
    <interactant intactId="EBI-301821">
        <id>Q92769</id>
        <label>HDAC2</label>
    </interactant>
    <organismsDiffer>false</organismsDiffer>
    <experiments>4</experiments>
</comment>
<comment type="interaction">
    <interactant intactId="EBI-714781">
        <id>Q9HCU9</id>
    </interactant>
    <interactant intactId="EBI-308629">
        <id>P56524</id>
        <label>HDAC4</label>
    </interactant>
    <organismsDiffer>false</organismsDiffer>
    <experiments>2</experiments>
</comment>
<comment type="interaction">
    <interactant intactId="EBI-714781">
        <id>Q9HCU9</id>
    </interactant>
    <interactant intactId="EBI-715576">
        <id>Q9UQL6</id>
        <label>HDAC5</label>
    </interactant>
    <organismsDiffer>false</organismsDiffer>
    <experiments>2</experiments>
</comment>
<comment type="interaction">
    <interactant intactId="EBI-714781">
        <id>Q9HCU9</id>
    </interactant>
    <interactant intactId="EBI-301697">
        <id>Q9UBN7</id>
        <label>HDAC6</label>
    </interactant>
    <organismsDiffer>false</organismsDiffer>
    <experiments>2</experiments>
</comment>
<comment type="interaction">
    <interactant intactId="EBI-714781">
        <id>Q9HCU9</id>
    </interactant>
    <interactant intactId="EBI-348259">
        <id>Q96EZ8</id>
        <label>MCRS1</label>
    </interactant>
    <organismsDiffer>false</organismsDiffer>
    <experiments>3</experiments>
</comment>
<comment type="interaction">
    <interactant intactId="EBI-714781">
        <id>Q9HCU9</id>
    </interactant>
    <interactant intactId="EBI-372942">
        <id>Q13287</id>
        <label>NMI</label>
    </interactant>
    <organismsDiffer>false</organismsDiffer>
    <experiments>7</experiments>
</comment>
<comment type="interaction">
    <interactant intactId="EBI-714781">
        <id>Q9HCU9</id>
    </interactant>
    <interactant intactId="EBI-455078">
        <id>Q969G3</id>
        <label>SMARCE1</label>
    </interactant>
    <organismsDiffer>false</organismsDiffer>
    <experiments>3</experiments>
</comment>
<comment type="interaction">
    <interactant intactId="EBI-714781">
        <id>Q9HCU9</id>
    </interactant>
    <interactant intactId="EBI-540496">
        <id>Q9H7L9</id>
        <label>SUDS3</label>
    </interactant>
    <organismsDiffer>false</organismsDiffer>
    <experiments>2</experiments>
</comment>
<comment type="subcellular location">
    <subcellularLocation>
        <location>Nucleus</location>
    </subcellularLocation>
    <subcellularLocation>
        <location>Cytoplasm</location>
    </subcellularLocation>
    <text>Predominantly nuclear.</text>
</comment>
<comment type="tissue specificity">
    <text evidence="3">Expression levels are higher in term placentas than in early placentas. Low levels of expression observed in normal pregnancies and in molar pregnancies.</text>
</comment>
<comment type="domain">
    <text>Contains an N-terminal anti-parallel coiled coil formed by two BRMS1 chains; this region can form homohexamers.</text>
</comment>
<comment type="PTM">
    <text evidence="8">Ubiquitinated by a cullin-RING-based BCR (BTB-CUL3-RBX1) E3 ubiquitin-protein ligase complex containing SPOP, leading to proteasomal degradation.</text>
</comment>
<comment type="similarity">
    <text evidence="9">Belongs to the BRMS1 family.</text>
</comment>
<comment type="online information" name="Atlas of Genetics and Cytogenetics in Oncology and Haematology">
    <link uri="https://atlasgeneticsoncology.org/gene/841/BRMS1"/>
</comment>
<organism>
    <name type="scientific">Homo sapiens</name>
    <name type="common">Human</name>
    <dbReference type="NCBI Taxonomy" id="9606"/>
    <lineage>
        <taxon>Eukaryota</taxon>
        <taxon>Metazoa</taxon>
        <taxon>Chordata</taxon>
        <taxon>Craniata</taxon>
        <taxon>Vertebrata</taxon>
        <taxon>Euteleostomi</taxon>
        <taxon>Mammalia</taxon>
        <taxon>Eutheria</taxon>
        <taxon>Euarchontoglires</taxon>
        <taxon>Primates</taxon>
        <taxon>Haplorrhini</taxon>
        <taxon>Catarrhini</taxon>
        <taxon>Hominidae</taxon>
        <taxon>Homo</taxon>
    </lineage>
</organism>
<proteinExistence type="evidence at protein level"/>
<evidence type="ECO:0000250" key="1">
    <source>
        <dbReference type="UniProtKB" id="Q5PSV4"/>
    </source>
</evidence>
<evidence type="ECO:0000256" key="2">
    <source>
        <dbReference type="SAM" id="MobiDB-lite"/>
    </source>
</evidence>
<evidence type="ECO:0000269" key="3">
    <source>
    </source>
</evidence>
<evidence type="ECO:0000269" key="4">
    <source>
    </source>
</evidence>
<evidence type="ECO:0000269" key="5">
    <source>
    </source>
</evidence>
<evidence type="ECO:0000269" key="6">
    <source>
    </source>
</evidence>
<evidence type="ECO:0000269" key="7">
    <source>
    </source>
</evidence>
<evidence type="ECO:0000269" key="8">
    <source>
    </source>
</evidence>
<evidence type="ECO:0000305" key="9"/>
<evidence type="ECO:0007744" key="10">
    <source>
    </source>
</evidence>
<evidence type="ECO:0007829" key="11">
    <source>
        <dbReference type="PDB" id="2XUS"/>
    </source>
</evidence>
<accession>Q9HCU9</accession>
<accession>Q6IAI2</accession>
<sequence length="246" mass="28461">MPVQPPSKDTEEMEAEGDSAAEMNGEEEESEEERSGSQTESEEESSEMDDEDYERRRSECVSEMLDLEKQFSELKEKLFRERLSQLRLRLEEVGAERAPEYTEPLGGLQRSLKIRIQVAGIYKGFCLDVIRNKYECELQGAKQHLESEKLLLYDTLQGELQERIQRLEEDRQSLDLSSEWWDDKLHARGSSRSWDSLPPSKRKKAPLVSGPYIVYMLQEIDILEDWTAIKKARAAVSPQKRKSDGP</sequence>